<name>KGUA_XANOM</name>
<accession>Q2P6N0</accession>
<keyword id="KW-0067">ATP-binding</keyword>
<keyword id="KW-0963">Cytoplasm</keyword>
<keyword id="KW-0418">Kinase</keyword>
<keyword id="KW-0547">Nucleotide-binding</keyword>
<keyword id="KW-0808">Transferase</keyword>
<reference key="1">
    <citation type="journal article" date="2005" name="Jpn. Agric. Res. Q.">
        <title>Genome sequence of Xanthomonas oryzae pv. oryzae suggests contribution of large numbers of effector genes and insertion sequences to its race diversity.</title>
        <authorList>
            <person name="Ochiai H."/>
            <person name="Inoue Y."/>
            <person name="Takeya M."/>
            <person name="Sasaki A."/>
            <person name="Kaku H."/>
        </authorList>
    </citation>
    <scope>NUCLEOTIDE SEQUENCE [LARGE SCALE GENOMIC DNA]</scope>
    <source>
        <strain>MAFF 311018</strain>
    </source>
</reference>
<sequence length="203" mass="22696">MRGTLYIVAAPSGAGKSSIVNATLARDPKIALSISFTSRAPRPGERHSEHYHFVSAEEFQGMIAAGDFFEYALVHGDWKGTARQSVEPQLAAGHDVLLEIDWQGARQVRQKVPDAVSVFILPPSRQALDERMRKRGQDSEDVMAQRLAAAREEMLHFEEFDYVIINETFDTAVSEMCAIFTASRLRRQAQQQRHAGLIQALLD</sequence>
<feature type="chain" id="PRO_0000266438" description="Guanylate kinase">
    <location>
        <begin position="1"/>
        <end position="203"/>
    </location>
</feature>
<feature type="domain" description="Guanylate kinase-like" evidence="1">
    <location>
        <begin position="3"/>
        <end position="181"/>
    </location>
</feature>
<feature type="binding site" evidence="1">
    <location>
        <begin position="10"/>
        <end position="17"/>
    </location>
    <ligand>
        <name>ATP</name>
        <dbReference type="ChEBI" id="CHEBI:30616"/>
    </ligand>
</feature>
<proteinExistence type="inferred from homology"/>
<organism>
    <name type="scientific">Xanthomonas oryzae pv. oryzae (strain MAFF 311018)</name>
    <dbReference type="NCBI Taxonomy" id="342109"/>
    <lineage>
        <taxon>Bacteria</taxon>
        <taxon>Pseudomonadati</taxon>
        <taxon>Pseudomonadota</taxon>
        <taxon>Gammaproteobacteria</taxon>
        <taxon>Lysobacterales</taxon>
        <taxon>Lysobacteraceae</taxon>
        <taxon>Xanthomonas</taxon>
    </lineage>
</organism>
<comment type="function">
    <text evidence="1">Essential for recycling GMP and indirectly, cGMP.</text>
</comment>
<comment type="catalytic activity">
    <reaction evidence="1">
        <text>GMP + ATP = GDP + ADP</text>
        <dbReference type="Rhea" id="RHEA:20780"/>
        <dbReference type="ChEBI" id="CHEBI:30616"/>
        <dbReference type="ChEBI" id="CHEBI:58115"/>
        <dbReference type="ChEBI" id="CHEBI:58189"/>
        <dbReference type="ChEBI" id="CHEBI:456216"/>
        <dbReference type="EC" id="2.7.4.8"/>
    </reaction>
</comment>
<comment type="subcellular location">
    <subcellularLocation>
        <location evidence="1">Cytoplasm</location>
    </subcellularLocation>
</comment>
<comment type="similarity">
    <text evidence="1">Belongs to the guanylate kinase family.</text>
</comment>
<gene>
    <name evidence="1" type="primary">gmk</name>
    <name type="ordered locus">XOO1042</name>
</gene>
<evidence type="ECO:0000255" key="1">
    <source>
        <dbReference type="HAMAP-Rule" id="MF_00328"/>
    </source>
</evidence>
<dbReference type="EC" id="2.7.4.8" evidence="1"/>
<dbReference type="EMBL" id="AP008229">
    <property type="protein sequence ID" value="BAE67797.1"/>
    <property type="molecule type" value="Genomic_DNA"/>
</dbReference>
<dbReference type="RefSeq" id="WP_011257983.1">
    <property type="nucleotide sequence ID" value="NC_007705.1"/>
</dbReference>
<dbReference type="SMR" id="Q2P6N0"/>
<dbReference type="KEGG" id="xom:XOO1042"/>
<dbReference type="HOGENOM" id="CLU_001715_1_0_6"/>
<dbReference type="GO" id="GO:0005829">
    <property type="term" value="C:cytosol"/>
    <property type="evidence" value="ECO:0007669"/>
    <property type="project" value="TreeGrafter"/>
</dbReference>
<dbReference type="GO" id="GO:0005524">
    <property type="term" value="F:ATP binding"/>
    <property type="evidence" value="ECO:0007669"/>
    <property type="project" value="UniProtKB-UniRule"/>
</dbReference>
<dbReference type="GO" id="GO:0004385">
    <property type="term" value="F:guanylate kinase activity"/>
    <property type="evidence" value="ECO:0007669"/>
    <property type="project" value="UniProtKB-UniRule"/>
</dbReference>
<dbReference type="CDD" id="cd00071">
    <property type="entry name" value="GMPK"/>
    <property type="match status" value="1"/>
</dbReference>
<dbReference type="FunFam" id="3.30.63.10:FF:000005">
    <property type="entry name" value="Guanylate kinase"/>
    <property type="match status" value="1"/>
</dbReference>
<dbReference type="FunFam" id="3.40.50.300:FF:000084">
    <property type="entry name" value="Guanylate kinase"/>
    <property type="match status" value="1"/>
</dbReference>
<dbReference type="Gene3D" id="3.30.63.10">
    <property type="entry name" value="Guanylate Kinase phosphate binding domain"/>
    <property type="match status" value="1"/>
</dbReference>
<dbReference type="Gene3D" id="3.40.50.300">
    <property type="entry name" value="P-loop containing nucleotide triphosphate hydrolases"/>
    <property type="match status" value="1"/>
</dbReference>
<dbReference type="HAMAP" id="MF_00328">
    <property type="entry name" value="Guanylate_kinase"/>
    <property type="match status" value="1"/>
</dbReference>
<dbReference type="InterPro" id="IPR008145">
    <property type="entry name" value="GK/Ca_channel_bsu"/>
</dbReference>
<dbReference type="InterPro" id="IPR008144">
    <property type="entry name" value="Guanylate_kin-like_dom"/>
</dbReference>
<dbReference type="InterPro" id="IPR017665">
    <property type="entry name" value="Guanylate_kinase"/>
</dbReference>
<dbReference type="InterPro" id="IPR027417">
    <property type="entry name" value="P-loop_NTPase"/>
</dbReference>
<dbReference type="NCBIfam" id="TIGR03263">
    <property type="entry name" value="guanyl_kin"/>
    <property type="match status" value="1"/>
</dbReference>
<dbReference type="PANTHER" id="PTHR23117:SF13">
    <property type="entry name" value="GUANYLATE KINASE"/>
    <property type="match status" value="1"/>
</dbReference>
<dbReference type="PANTHER" id="PTHR23117">
    <property type="entry name" value="GUANYLATE KINASE-RELATED"/>
    <property type="match status" value="1"/>
</dbReference>
<dbReference type="Pfam" id="PF00625">
    <property type="entry name" value="Guanylate_kin"/>
    <property type="match status" value="1"/>
</dbReference>
<dbReference type="SMART" id="SM00072">
    <property type="entry name" value="GuKc"/>
    <property type="match status" value="1"/>
</dbReference>
<dbReference type="SUPFAM" id="SSF52540">
    <property type="entry name" value="P-loop containing nucleoside triphosphate hydrolases"/>
    <property type="match status" value="1"/>
</dbReference>
<dbReference type="PROSITE" id="PS50052">
    <property type="entry name" value="GUANYLATE_KINASE_2"/>
    <property type="match status" value="1"/>
</dbReference>
<protein>
    <recommendedName>
        <fullName evidence="1">Guanylate kinase</fullName>
        <ecNumber evidence="1">2.7.4.8</ecNumber>
    </recommendedName>
    <alternativeName>
        <fullName evidence="1">GMP kinase</fullName>
    </alternativeName>
</protein>